<feature type="chain" id="PRO_0000257101" description="Probable transcriptional regulatory protein PFL_4766">
    <location>
        <begin position="1"/>
        <end position="248"/>
    </location>
</feature>
<accession>Q4K7D6</accession>
<reference key="1">
    <citation type="journal article" date="2005" name="Nat. Biotechnol.">
        <title>Complete genome sequence of the plant commensal Pseudomonas fluorescens Pf-5.</title>
        <authorList>
            <person name="Paulsen I.T."/>
            <person name="Press C.M."/>
            <person name="Ravel J."/>
            <person name="Kobayashi D.Y."/>
            <person name="Myers G.S.A."/>
            <person name="Mavrodi D.V."/>
            <person name="DeBoy R.T."/>
            <person name="Seshadri R."/>
            <person name="Ren Q."/>
            <person name="Madupu R."/>
            <person name="Dodson R.J."/>
            <person name="Durkin A.S."/>
            <person name="Brinkac L.M."/>
            <person name="Daugherty S.C."/>
            <person name="Sullivan S.A."/>
            <person name="Rosovitz M.J."/>
            <person name="Gwinn M.L."/>
            <person name="Zhou L."/>
            <person name="Schneider D.J."/>
            <person name="Cartinhour S.W."/>
            <person name="Nelson W.C."/>
            <person name="Weidman J."/>
            <person name="Watkins K."/>
            <person name="Tran K."/>
            <person name="Khouri H."/>
            <person name="Pierson E.A."/>
            <person name="Pierson L.S. III"/>
            <person name="Thomashow L.S."/>
            <person name="Loper J.E."/>
        </authorList>
    </citation>
    <scope>NUCLEOTIDE SEQUENCE [LARGE SCALE GENOMIC DNA]</scope>
    <source>
        <strain>ATCC BAA-477 / NRRL B-23932 / Pf-5</strain>
    </source>
</reference>
<proteinExistence type="inferred from homology"/>
<keyword id="KW-0963">Cytoplasm</keyword>
<keyword id="KW-0238">DNA-binding</keyword>
<keyword id="KW-0804">Transcription</keyword>
<keyword id="KW-0805">Transcription regulation</keyword>
<name>Y4766_PSEF5</name>
<dbReference type="EMBL" id="CP000076">
    <property type="protein sequence ID" value="AAY93996.1"/>
    <property type="molecule type" value="Genomic_DNA"/>
</dbReference>
<dbReference type="RefSeq" id="WP_011063021.1">
    <property type="nucleotide sequence ID" value="NC_004129.6"/>
</dbReference>
<dbReference type="SMR" id="Q4K7D6"/>
<dbReference type="STRING" id="220664.PFL_4766"/>
<dbReference type="KEGG" id="pfl:PFL_4766"/>
<dbReference type="PATRIC" id="fig|220664.5.peg.4876"/>
<dbReference type="eggNOG" id="COG0217">
    <property type="taxonomic scope" value="Bacteria"/>
</dbReference>
<dbReference type="HOGENOM" id="CLU_062974_2_2_6"/>
<dbReference type="Proteomes" id="UP000008540">
    <property type="component" value="Chromosome"/>
</dbReference>
<dbReference type="GO" id="GO:0005829">
    <property type="term" value="C:cytosol"/>
    <property type="evidence" value="ECO:0007669"/>
    <property type="project" value="TreeGrafter"/>
</dbReference>
<dbReference type="GO" id="GO:0003677">
    <property type="term" value="F:DNA binding"/>
    <property type="evidence" value="ECO:0007669"/>
    <property type="project" value="UniProtKB-UniRule"/>
</dbReference>
<dbReference type="GO" id="GO:0006355">
    <property type="term" value="P:regulation of DNA-templated transcription"/>
    <property type="evidence" value="ECO:0007669"/>
    <property type="project" value="UniProtKB-UniRule"/>
</dbReference>
<dbReference type="FunFam" id="1.10.10.200:FF:000001">
    <property type="entry name" value="Probable transcriptional regulatory protein YebC"/>
    <property type="match status" value="1"/>
</dbReference>
<dbReference type="FunFam" id="3.30.70.980:FF:000002">
    <property type="entry name" value="Probable transcriptional regulatory protein YebC"/>
    <property type="match status" value="1"/>
</dbReference>
<dbReference type="Gene3D" id="1.10.10.200">
    <property type="match status" value="1"/>
</dbReference>
<dbReference type="Gene3D" id="3.30.70.980">
    <property type="match status" value="2"/>
</dbReference>
<dbReference type="HAMAP" id="MF_00693">
    <property type="entry name" value="Transcrip_reg_TACO1"/>
    <property type="match status" value="1"/>
</dbReference>
<dbReference type="InterPro" id="IPR017856">
    <property type="entry name" value="Integrase-like_N"/>
</dbReference>
<dbReference type="InterPro" id="IPR048300">
    <property type="entry name" value="TACO1_YebC-like_2nd/3rd_dom"/>
</dbReference>
<dbReference type="InterPro" id="IPR049083">
    <property type="entry name" value="TACO1_YebC_N"/>
</dbReference>
<dbReference type="InterPro" id="IPR002876">
    <property type="entry name" value="Transcrip_reg_TACO1-like"/>
</dbReference>
<dbReference type="InterPro" id="IPR026564">
    <property type="entry name" value="Transcrip_reg_TACO1-like_dom3"/>
</dbReference>
<dbReference type="InterPro" id="IPR029072">
    <property type="entry name" value="YebC-like"/>
</dbReference>
<dbReference type="NCBIfam" id="NF001030">
    <property type="entry name" value="PRK00110.1"/>
    <property type="match status" value="1"/>
</dbReference>
<dbReference type="NCBIfam" id="NF009044">
    <property type="entry name" value="PRK12378.1"/>
    <property type="match status" value="1"/>
</dbReference>
<dbReference type="NCBIfam" id="TIGR01033">
    <property type="entry name" value="YebC/PmpR family DNA-binding transcriptional regulator"/>
    <property type="match status" value="1"/>
</dbReference>
<dbReference type="PANTHER" id="PTHR12532:SF6">
    <property type="entry name" value="TRANSCRIPTIONAL REGULATORY PROTEIN YEBC-RELATED"/>
    <property type="match status" value="1"/>
</dbReference>
<dbReference type="PANTHER" id="PTHR12532">
    <property type="entry name" value="TRANSLATIONAL ACTIVATOR OF CYTOCHROME C OXIDASE 1"/>
    <property type="match status" value="1"/>
</dbReference>
<dbReference type="Pfam" id="PF20772">
    <property type="entry name" value="TACO1_YebC_N"/>
    <property type="match status" value="1"/>
</dbReference>
<dbReference type="Pfam" id="PF01709">
    <property type="entry name" value="Transcrip_reg"/>
    <property type="match status" value="1"/>
</dbReference>
<dbReference type="SUPFAM" id="SSF75625">
    <property type="entry name" value="YebC-like"/>
    <property type="match status" value="1"/>
</dbReference>
<protein>
    <recommendedName>
        <fullName evidence="1">Probable transcriptional regulatory protein PFL_4766</fullName>
    </recommendedName>
</protein>
<gene>
    <name type="ordered locus">PFL_4766</name>
</gene>
<comment type="subcellular location">
    <subcellularLocation>
        <location evidence="1">Cytoplasm</location>
    </subcellularLocation>
</comment>
<comment type="similarity">
    <text evidence="1">Belongs to the TACO1 family.</text>
</comment>
<organism>
    <name type="scientific">Pseudomonas fluorescens (strain ATCC BAA-477 / NRRL B-23932 / Pf-5)</name>
    <dbReference type="NCBI Taxonomy" id="220664"/>
    <lineage>
        <taxon>Bacteria</taxon>
        <taxon>Pseudomonadati</taxon>
        <taxon>Pseudomonadota</taxon>
        <taxon>Gammaproteobacteria</taxon>
        <taxon>Pseudomonadales</taxon>
        <taxon>Pseudomonadaceae</taxon>
        <taxon>Pseudomonas</taxon>
    </lineage>
</organism>
<evidence type="ECO:0000255" key="1">
    <source>
        <dbReference type="HAMAP-Rule" id="MF_00693"/>
    </source>
</evidence>
<sequence>MAGHSKWANIKHRKERQDAKRGKIFTKWIRELTVAARQGGGDPNSNPRLRLALDKALGANMSRDIIDRAIARGTGAAGSDDVVELTYEGYGPNGVAVMVECMTDNRNRTAAAVRHAFSKCGGNLGTDGSVAYLFERKGQITFAEGVDEDALMEAAMEADADDVVSNEDGSIDVFTSFAGFYGVRNALEAAGFTAADAEIVMLPTTSAELDLEGAEKVLKLIDMLEDLDDVQNVYSNADIPESVAEQLG</sequence>